<feature type="chain" id="PRO_0000256040" description="ATP-dependent RNA helicase DBP8">
    <location>
        <begin position="1"/>
        <end position="508"/>
    </location>
</feature>
<feature type="domain" description="Helicase ATP-binding" evidence="2">
    <location>
        <begin position="108"/>
        <end position="287"/>
    </location>
</feature>
<feature type="domain" description="Helicase C-terminal" evidence="3">
    <location>
        <begin position="323"/>
        <end position="465"/>
    </location>
</feature>
<feature type="region of interest" description="Disordered" evidence="4">
    <location>
        <begin position="1"/>
        <end position="68"/>
    </location>
</feature>
<feature type="short sequence motif" description="Q motif">
    <location>
        <begin position="77"/>
        <end position="105"/>
    </location>
</feature>
<feature type="short sequence motif" description="DEAD box">
    <location>
        <begin position="230"/>
        <end position="233"/>
    </location>
</feature>
<feature type="compositionally biased region" description="Low complexity" evidence="4">
    <location>
        <begin position="57"/>
        <end position="67"/>
    </location>
</feature>
<feature type="binding site" evidence="2">
    <location>
        <begin position="121"/>
        <end position="128"/>
    </location>
    <ligand>
        <name>ATP</name>
        <dbReference type="ChEBI" id="CHEBI:30616"/>
    </ligand>
</feature>
<evidence type="ECO:0000250" key="1"/>
<evidence type="ECO:0000255" key="2">
    <source>
        <dbReference type="PROSITE-ProRule" id="PRU00541"/>
    </source>
</evidence>
<evidence type="ECO:0000255" key="3">
    <source>
        <dbReference type="PROSITE-ProRule" id="PRU00542"/>
    </source>
</evidence>
<evidence type="ECO:0000256" key="4">
    <source>
        <dbReference type="SAM" id="MobiDB-lite"/>
    </source>
</evidence>
<evidence type="ECO:0000305" key="5"/>
<sequence length="508" mass="55613">MANDYPSSDEEIMEAQTGSRKRRKTSSDSESDTAPRAPTATSISRVKPAKDRAGHQAASRVAVSKASVPEENGKEKVSFASIDVAPWLVASLASMEIKRPTGIQKACIPEILKGRDCIGGSRTGTGKTVAFSVPILQKWAEDPSGIFGLIITPTRELAIQIYEQVKAISAPQSMKPILVTGGSDQREQAIALASRPHVVIATPGRLAEHIKTSGEDTICGLRRVRFVVFDEADRLLAPGRGSMIPDIETCLSVLPPKEQRQTLLFTATVTPEVLALKSQPRAPGRLPIFVCEVDTETLATPASLSQLYLQTPVTHKECYLHVLLLTPLNLTKSVIIFCNRTKTATLLEYMLRMLDHRVTALHSGLKQQDRISNLARFRAQAARILVATDVAARGLDIPEVGLVVNFDVPRDPDDYIHRVGRTARAGRPGNSVTFIGQRDVELVLAIEERVGGKMSEFEEEGVSVEGRVVRDALKIVTEKKREALLNIEEGRDVKGNRMVGMKKRRVVE</sequence>
<comment type="function">
    <text evidence="1">ATP-binding RNA helicase involved in 40S ribosomal subunit biogenesis and is required for the normal formation of 18S rRNAs through pre-rRNA processing at A0, A1 and A2 sites. Required for vegetative growth (By similarity).</text>
</comment>
<comment type="catalytic activity">
    <reaction>
        <text>ATP + H2O = ADP + phosphate + H(+)</text>
        <dbReference type="Rhea" id="RHEA:13065"/>
        <dbReference type="ChEBI" id="CHEBI:15377"/>
        <dbReference type="ChEBI" id="CHEBI:15378"/>
        <dbReference type="ChEBI" id="CHEBI:30616"/>
        <dbReference type="ChEBI" id="CHEBI:43474"/>
        <dbReference type="ChEBI" id="CHEBI:456216"/>
        <dbReference type="EC" id="3.6.4.13"/>
    </reaction>
</comment>
<comment type="subcellular location">
    <subcellularLocation>
        <location evidence="1">Nucleus</location>
        <location evidence="1">Nucleolus</location>
    </subcellularLocation>
</comment>
<comment type="domain">
    <text>The Q motif is unique to and characteristic of the DEAD box family of RNA helicases and controls ATP binding and hydrolysis.</text>
</comment>
<comment type="similarity">
    <text evidence="5">Belongs to the DEAD box helicase family. DDX49/DBP8 subfamily.</text>
</comment>
<comment type="sequence caution" evidence="5">
    <conflict type="erroneous gene model prediction">
        <sequence resource="EMBL-CDS" id="EAT80850"/>
    </conflict>
    <text>The predicted gene SNOG_11806 has been split into 2 genes: SNOG_11805 and SNOG_11806.</text>
</comment>
<dbReference type="EC" id="3.6.4.13"/>
<dbReference type="EMBL" id="CH445344">
    <property type="protein sequence ID" value="EAT80850.2"/>
    <property type="status" value="ALT_SEQ"/>
    <property type="molecule type" value="Genomic_DNA"/>
</dbReference>
<dbReference type="SMR" id="Q0U8V9"/>
<dbReference type="FunCoup" id="Q0U8V9">
    <property type="interactions" value="767"/>
</dbReference>
<dbReference type="STRING" id="321614.Q0U8V9"/>
<dbReference type="VEuPathDB" id="FungiDB:JI435_307920"/>
<dbReference type="InParanoid" id="Q0U8V9"/>
<dbReference type="OMA" id="IMIFTDT"/>
<dbReference type="Proteomes" id="UP000001055">
    <property type="component" value="Unassembled WGS sequence"/>
</dbReference>
<dbReference type="GO" id="GO:0005730">
    <property type="term" value="C:nucleolus"/>
    <property type="evidence" value="ECO:0007669"/>
    <property type="project" value="UniProtKB-SubCell"/>
</dbReference>
<dbReference type="GO" id="GO:0005634">
    <property type="term" value="C:nucleus"/>
    <property type="evidence" value="ECO:0000318"/>
    <property type="project" value="GO_Central"/>
</dbReference>
<dbReference type="GO" id="GO:0005524">
    <property type="term" value="F:ATP binding"/>
    <property type="evidence" value="ECO:0007669"/>
    <property type="project" value="UniProtKB-KW"/>
</dbReference>
<dbReference type="GO" id="GO:0016887">
    <property type="term" value="F:ATP hydrolysis activity"/>
    <property type="evidence" value="ECO:0007669"/>
    <property type="project" value="RHEA"/>
</dbReference>
<dbReference type="GO" id="GO:0003723">
    <property type="term" value="F:RNA binding"/>
    <property type="evidence" value="ECO:0007669"/>
    <property type="project" value="UniProtKB-KW"/>
</dbReference>
<dbReference type="GO" id="GO:0003724">
    <property type="term" value="F:RNA helicase activity"/>
    <property type="evidence" value="ECO:0007669"/>
    <property type="project" value="UniProtKB-EC"/>
</dbReference>
<dbReference type="GO" id="GO:0006364">
    <property type="term" value="P:rRNA processing"/>
    <property type="evidence" value="ECO:0000318"/>
    <property type="project" value="GO_Central"/>
</dbReference>
<dbReference type="CDD" id="cd17955">
    <property type="entry name" value="DEADc_DDX49"/>
    <property type="match status" value="1"/>
</dbReference>
<dbReference type="CDD" id="cd18787">
    <property type="entry name" value="SF2_C_DEAD"/>
    <property type="match status" value="1"/>
</dbReference>
<dbReference type="Gene3D" id="3.40.50.300">
    <property type="entry name" value="P-loop containing nucleotide triphosphate hydrolases"/>
    <property type="match status" value="2"/>
</dbReference>
<dbReference type="InterPro" id="IPR011545">
    <property type="entry name" value="DEAD/DEAH_box_helicase_dom"/>
</dbReference>
<dbReference type="InterPro" id="IPR050079">
    <property type="entry name" value="DEAD_box_RNA_helicase"/>
</dbReference>
<dbReference type="InterPro" id="IPR014001">
    <property type="entry name" value="Helicase_ATP-bd"/>
</dbReference>
<dbReference type="InterPro" id="IPR001650">
    <property type="entry name" value="Helicase_C-like"/>
</dbReference>
<dbReference type="InterPro" id="IPR027417">
    <property type="entry name" value="P-loop_NTPase"/>
</dbReference>
<dbReference type="InterPro" id="IPR000629">
    <property type="entry name" value="RNA-helicase_DEAD-box_CS"/>
</dbReference>
<dbReference type="InterPro" id="IPR014014">
    <property type="entry name" value="RNA_helicase_DEAD_Q_motif"/>
</dbReference>
<dbReference type="PANTHER" id="PTHR47959:SF24">
    <property type="entry name" value="ATP-DEPENDENT RNA HELICASE"/>
    <property type="match status" value="1"/>
</dbReference>
<dbReference type="PANTHER" id="PTHR47959">
    <property type="entry name" value="ATP-DEPENDENT RNA HELICASE RHLE-RELATED"/>
    <property type="match status" value="1"/>
</dbReference>
<dbReference type="Pfam" id="PF00270">
    <property type="entry name" value="DEAD"/>
    <property type="match status" value="1"/>
</dbReference>
<dbReference type="Pfam" id="PF00271">
    <property type="entry name" value="Helicase_C"/>
    <property type="match status" value="1"/>
</dbReference>
<dbReference type="SMART" id="SM00487">
    <property type="entry name" value="DEXDc"/>
    <property type="match status" value="1"/>
</dbReference>
<dbReference type="SMART" id="SM00490">
    <property type="entry name" value="HELICc"/>
    <property type="match status" value="1"/>
</dbReference>
<dbReference type="SUPFAM" id="SSF52540">
    <property type="entry name" value="P-loop containing nucleoside triphosphate hydrolases"/>
    <property type="match status" value="1"/>
</dbReference>
<dbReference type="PROSITE" id="PS00039">
    <property type="entry name" value="DEAD_ATP_HELICASE"/>
    <property type="match status" value="1"/>
</dbReference>
<dbReference type="PROSITE" id="PS51192">
    <property type="entry name" value="HELICASE_ATP_BIND_1"/>
    <property type="match status" value="1"/>
</dbReference>
<dbReference type="PROSITE" id="PS51194">
    <property type="entry name" value="HELICASE_CTER"/>
    <property type="match status" value="1"/>
</dbReference>
<dbReference type="PROSITE" id="PS51195">
    <property type="entry name" value="Q_MOTIF"/>
    <property type="match status" value="1"/>
</dbReference>
<proteinExistence type="inferred from homology"/>
<accession>Q0U8V9</accession>
<accession>Q0U8V8</accession>
<gene>
    <name type="primary">DBP8</name>
    <name type="ORF">SNOG_11805</name>
</gene>
<keyword id="KW-0067">ATP-binding</keyword>
<keyword id="KW-0347">Helicase</keyword>
<keyword id="KW-0378">Hydrolase</keyword>
<keyword id="KW-0547">Nucleotide-binding</keyword>
<keyword id="KW-0539">Nucleus</keyword>
<keyword id="KW-0690">Ribosome biogenesis</keyword>
<keyword id="KW-0694">RNA-binding</keyword>
<keyword id="KW-0698">rRNA processing</keyword>
<organism>
    <name type="scientific">Phaeosphaeria nodorum (strain SN15 / ATCC MYA-4574 / FGSC 10173)</name>
    <name type="common">Glume blotch fungus</name>
    <name type="synonym">Parastagonospora nodorum</name>
    <dbReference type="NCBI Taxonomy" id="321614"/>
    <lineage>
        <taxon>Eukaryota</taxon>
        <taxon>Fungi</taxon>
        <taxon>Dikarya</taxon>
        <taxon>Ascomycota</taxon>
        <taxon>Pezizomycotina</taxon>
        <taxon>Dothideomycetes</taxon>
        <taxon>Pleosporomycetidae</taxon>
        <taxon>Pleosporales</taxon>
        <taxon>Pleosporineae</taxon>
        <taxon>Phaeosphaeriaceae</taxon>
        <taxon>Parastagonospora</taxon>
    </lineage>
</organism>
<reference key="1">
    <citation type="journal article" date="2007" name="Plant Cell">
        <title>Dothideomycete-plant interactions illuminated by genome sequencing and EST analysis of the wheat pathogen Stagonospora nodorum.</title>
        <authorList>
            <person name="Hane J.K."/>
            <person name="Lowe R.G.T."/>
            <person name="Solomon P.S."/>
            <person name="Tan K.-C."/>
            <person name="Schoch C.L."/>
            <person name="Spatafora J.W."/>
            <person name="Crous P.W."/>
            <person name="Kodira C.D."/>
            <person name="Birren B.W."/>
            <person name="Galagan J.E."/>
            <person name="Torriani S.F.F."/>
            <person name="McDonald B.A."/>
            <person name="Oliver R.P."/>
        </authorList>
    </citation>
    <scope>NUCLEOTIDE SEQUENCE [LARGE SCALE GENOMIC DNA]</scope>
    <source>
        <strain>SN15 / ATCC MYA-4574 / FGSC 10173</strain>
    </source>
</reference>
<protein>
    <recommendedName>
        <fullName>ATP-dependent RNA helicase DBP8</fullName>
        <ecNumber>3.6.4.13</ecNumber>
    </recommendedName>
</protein>
<name>DBP8_PHANO</name>